<protein>
    <recommendedName>
        <fullName evidence="1">Phospho-N-acetylmuramoyl-pentapeptide-transferase</fullName>
        <ecNumber evidence="1">2.7.8.13</ecNumber>
    </recommendedName>
    <alternativeName>
        <fullName evidence="1">UDP-MurNAc-pentapeptide phosphotransferase</fullName>
    </alternativeName>
</protein>
<gene>
    <name evidence="1" type="primary">mraY</name>
    <name type="ordered locus">CPR_1828</name>
</gene>
<keyword id="KW-0131">Cell cycle</keyword>
<keyword id="KW-0132">Cell division</keyword>
<keyword id="KW-1003">Cell membrane</keyword>
<keyword id="KW-0133">Cell shape</keyword>
<keyword id="KW-0961">Cell wall biogenesis/degradation</keyword>
<keyword id="KW-0460">Magnesium</keyword>
<keyword id="KW-0472">Membrane</keyword>
<keyword id="KW-0479">Metal-binding</keyword>
<keyword id="KW-0573">Peptidoglycan synthesis</keyword>
<keyword id="KW-0808">Transferase</keyword>
<keyword id="KW-0812">Transmembrane</keyword>
<keyword id="KW-1133">Transmembrane helix</keyword>
<evidence type="ECO:0000255" key="1">
    <source>
        <dbReference type="HAMAP-Rule" id="MF_00038"/>
    </source>
</evidence>
<reference key="1">
    <citation type="journal article" date="2006" name="Genome Res.">
        <title>Skewed genomic variability in strains of the toxigenic bacterial pathogen, Clostridium perfringens.</title>
        <authorList>
            <person name="Myers G.S.A."/>
            <person name="Rasko D.A."/>
            <person name="Cheung J.K."/>
            <person name="Ravel J."/>
            <person name="Seshadri R."/>
            <person name="DeBoy R.T."/>
            <person name="Ren Q."/>
            <person name="Varga J."/>
            <person name="Awad M.M."/>
            <person name="Brinkac L.M."/>
            <person name="Daugherty S.C."/>
            <person name="Haft D.H."/>
            <person name="Dodson R.J."/>
            <person name="Madupu R."/>
            <person name="Nelson W.C."/>
            <person name="Rosovitz M.J."/>
            <person name="Sullivan S.A."/>
            <person name="Khouri H."/>
            <person name="Dimitrov G.I."/>
            <person name="Watkins K.L."/>
            <person name="Mulligan S."/>
            <person name="Benton J."/>
            <person name="Radune D."/>
            <person name="Fisher D.J."/>
            <person name="Atkins H.S."/>
            <person name="Hiscox T."/>
            <person name="Jost B.H."/>
            <person name="Billington S.J."/>
            <person name="Songer J.G."/>
            <person name="McClane B.A."/>
            <person name="Titball R.W."/>
            <person name="Rood J.I."/>
            <person name="Melville S.B."/>
            <person name="Paulsen I.T."/>
        </authorList>
    </citation>
    <scope>NUCLEOTIDE SEQUENCE [LARGE SCALE GENOMIC DNA]</scope>
    <source>
        <strain>SM101 / Type A</strain>
    </source>
</reference>
<dbReference type="EC" id="2.7.8.13" evidence="1"/>
<dbReference type="EMBL" id="CP000312">
    <property type="protein sequence ID" value="ABG86279.1"/>
    <property type="molecule type" value="Genomic_DNA"/>
</dbReference>
<dbReference type="RefSeq" id="WP_011592718.1">
    <property type="nucleotide sequence ID" value="NC_008262.1"/>
</dbReference>
<dbReference type="SMR" id="Q0SRW4"/>
<dbReference type="KEGG" id="cpr:CPR_1828"/>
<dbReference type="UniPathway" id="UPA00219"/>
<dbReference type="Proteomes" id="UP000001824">
    <property type="component" value="Chromosome"/>
</dbReference>
<dbReference type="GO" id="GO:0005886">
    <property type="term" value="C:plasma membrane"/>
    <property type="evidence" value="ECO:0007669"/>
    <property type="project" value="UniProtKB-SubCell"/>
</dbReference>
<dbReference type="GO" id="GO:0046872">
    <property type="term" value="F:metal ion binding"/>
    <property type="evidence" value="ECO:0007669"/>
    <property type="project" value="UniProtKB-KW"/>
</dbReference>
<dbReference type="GO" id="GO:0008963">
    <property type="term" value="F:phospho-N-acetylmuramoyl-pentapeptide-transferase activity"/>
    <property type="evidence" value="ECO:0007669"/>
    <property type="project" value="UniProtKB-UniRule"/>
</dbReference>
<dbReference type="GO" id="GO:0051992">
    <property type="term" value="F:UDP-N-acetylmuramoyl-L-alanyl-D-glutamyl-meso-2,6-diaminopimelyl-D-alanyl-D-alanine:undecaprenyl-phosphate transferase activity"/>
    <property type="evidence" value="ECO:0007669"/>
    <property type="project" value="RHEA"/>
</dbReference>
<dbReference type="GO" id="GO:0051301">
    <property type="term" value="P:cell division"/>
    <property type="evidence" value="ECO:0007669"/>
    <property type="project" value="UniProtKB-KW"/>
</dbReference>
<dbReference type="GO" id="GO:0071555">
    <property type="term" value="P:cell wall organization"/>
    <property type="evidence" value="ECO:0007669"/>
    <property type="project" value="UniProtKB-KW"/>
</dbReference>
<dbReference type="GO" id="GO:0009252">
    <property type="term" value="P:peptidoglycan biosynthetic process"/>
    <property type="evidence" value="ECO:0007669"/>
    <property type="project" value="UniProtKB-UniRule"/>
</dbReference>
<dbReference type="GO" id="GO:0008360">
    <property type="term" value="P:regulation of cell shape"/>
    <property type="evidence" value="ECO:0007669"/>
    <property type="project" value="UniProtKB-KW"/>
</dbReference>
<dbReference type="CDD" id="cd06852">
    <property type="entry name" value="GT_MraY"/>
    <property type="match status" value="1"/>
</dbReference>
<dbReference type="HAMAP" id="MF_00038">
    <property type="entry name" value="MraY"/>
    <property type="match status" value="1"/>
</dbReference>
<dbReference type="InterPro" id="IPR000715">
    <property type="entry name" value="Glycosyl_transferase_4"/>
</dbReference>
<dbReference type="InterPro" id="IPR003524">
    <property type="entry name" value="PNAcMuramoyl-5peptid_Trfase"/>
</dbReference>
<dbReference type="InterPro" id="IPR018480">
    <property type="entry name" value="PNAcMuramoyl-5peptid_Trfase_CS"/>
</dbReference>
<dbReference type="NCBIfam" id="TIGR00445">
    <property type="entry name" value="mraY"/>
    <property type="match status" value="1"/>
</dbReference>
<dbReference type="PANTHER" id="PTHR22926">
    <property type="entry name" value="PHOSPHO-N-ACETYLMURAMOYL-PENTAPEPTIDE-TRANSFERASE"/>
    <property type="match status" value="1"/>
</dbReference>
<dbReference type="PANTHER" id="PTHR22926:SF5">
    <property type="entry name" value="PHOSPHO-N-ACETYLMURAMOYL-PENTAPEPTIDE-TRANSFERASE HOMOLOG"/>
    <property type="match status" value="1"/>
</dbReference>
<dbReference type="Pfam" id="PF00953">
    <property type="entry name" value="Glycos_transf_4"/>
    <property type="match status" value="1"/>
</dbReference>
<dbReference type="PROSITE" id="PS01348">
    <property type="entry name" value="MRAY_2"/>
    <property type="match status" value="1"/>
</dbReference>
<name>MRAY_CLOPS</name>
<proteinExistence type="inferred from homology"/>
<sequence length="323" mass="35065">MEILKSMIDPKIVMAIVISFIVASILGPIIIPLLHKLKFGQNIRQEGPKSHLKKAGTPTIGGLIFIFATIITMFVMVGNPTDEAMIALYSFVGFGFVGFLDDLLKIIKKKNEGLTSGQKMILLLIISGFLTWYAYKYIGTSINIPFLNGQINLGLFYIPAAMFYFAGVTNAVNLTDGLDGLATSVTVLVTTFLGIISYNLGHISLAIFCVALAGALLAFLRFNAFPARVFMGDTGSLALGGAVAMVALILKMPLILVLIGIIYVIETLSVILQVASFKLTGKRIFKMAPIHHHFEQLGWSETKIVSVFSIITVVFCFIAFASL</sequence>
<organism>
    <name type="scientific">Clostridium perfringens (strain SM101 / Type A)</name>
    <dbReference type="NCBI Taxonomy" id="289380"/>
    <lineage>
        <taxon>Bacteria</taxon>
        <taxon>Bacillati</taxon>
        <taxon>Bacillota</taxon>
        <taxon>Clostridia</taxon>
        <taxon>Eubacteriales</taxon>
        <taxon>Clostridiaceae</taxon>
        <taxon>Clostridium</taxon>
    </lineage>
</organism>
<comment type="function">
    <text evidence="1">Catalyzes the initial step of the lipid cycle reactions in the biosynthesis of the cell wall peptidoglycan: transfers peptidoglycan precursor phospho-MurNAc-pentapeptide from UDP-MurNAc-pentapeptide onto the lipid carrier undecaprenyl phosphate, yielding undecaprenyl-pyrophosphoryl-MurNAc-pentapeptide, known as lipid I.</text>
</comment>
<comment type="catalytic activity">
    <reaction evidence="1">
        <text>UDP-N-acetyl-alpha-D-muramoyl-L-alanyl-gamma-D-glutamyl-meso-2,6-diaminopimeloyl-D-alanyl-D-alanine + di-trans,octa-cis-undecaprenyl phosphate = di-trans,octa-cis-undecaprenyl diphospho-N-acetyl-alpha-D-muramoyl-L-alanyl-D-glutamyl-meso-2,6-diaminopimeloyl-D-alanyl-D-alanine + UMP</text>
        <dbReference type="Rhea" id="RHEA:28386"/>
        <dbReference type="ChEBI" id="CHEBI:57865"/>
        <dbReference type="ChEBI" id="CHEBI:60392"/>
        <dbReference type="ChEBI" id="CHEBI:61386"/>
        <dbReference type="ChEBI" id="CHEBI:61387"/>
        <dbReference type="EC" id="2.7.8.13"/>
    </reaction>
</comment>
<comment type="cofactor">
    <cofactor evidence="1">
        <name>Mg(2+)</name>
        <dbReference type="ChEBI" id="CHEBI:18420"/>
    </cofactor>
</comment>
<comment type="pathway">
    <text evidence="1">Cell wall biogenesis; peptidoglycan biosynthesis.</text>
</comment>
<comment type="subcellular location">
    <subcellularLocation>
        <location evidence="1">Cell membrane</location>
        <topology evidence="1">Multi-pass membrane protein</topology>
    </subcellularLocation>
</comment>
<comment type="similarity">
    <text evidence="1">Belongs to the glycosyltransferase 4 family. MraY subfamily.</text>
</comment>
<feature type="chain" id="PRO_0000332532" description="Phospho-N-acetylmuramoyl-pentapeptide-transferase">
    <location>
        <begin position="1"/>
        <end position="323"/>
    </location>
</feature>
<feature type="transmembrane region" description="Helical" evidence="1">
    <location>
        <begin position="12"/>
        <end position="32"/>
    </location>
</feature>
<feature type="transmembrane region" description="Helical" evidence="1">
    <location>
        <begin position="58"/>
        <end position="78"/>
    </location>
</feature>
<feature type="transmembrane region" description="Helical" evidence="1">
    <location>
        <begin position="84"/>
        <end position="104"/>
    </location>
</feature>
<feature type="transmembrane region" description="Helical" evidence="1">
    <location>
        <begin position="120"/>
        <end position="140"/>
    </location>
</feature>
<feature type="transmembrane region" description="Helical" evidence="1">
    <location>
        <begin position="151"/>
        <end position="171"/>
    </location>
</feature>
<feature type="transmembrane region" description="Helical" evidence="1">
    <location>
        <begin position="177"/>
        <end position="197"/>
    </location>
</feature>
<feature type="transmembrane region" description="Helical" evidence="1">
    <location>
        <begin position="200"/>
        <end position="220"/>
    </location>
</feature>
<feature type="transmembrane region" description="Helical" evidence="1">
    <location>
        <begin position="229"/>
        <end position="250"/>
    </location>
</feature>
<feature type="transmembrane region" description="Helical" evidence="1">
    <location>
        <begin position="303"/>
        <end position="323"/>
    </location>
</feature>
<accession>Q0SRW4</accession>